<comment type="function">
    <text>Potential calcium-dependent cell-adhesion protein. May be involved in the establishment and maintenance of specific neuronal connections in the brain.</text>
</comment>
<comment type="subcellular location">
    <subcellularLocation>
        <location evidence="1">Cell membrane</location>
        <topology evidence="1">Single-pass type I membrane protein</topology>
    </subcellularLocation>
</comment>
<proteinExistence type="inferred from homology"/>
<protein>
    <recommendedName>
        <fullName>Protocadherin beta-13</fullName>
        <shortName>PCDH-beta-13</shortName>
    </recommendedName>
</protein>
<evidence type="ECO:0000250" key="1"/>
<evidence type="ECO:0000255" key="2"/>
<evidence type="ECO:0000255" key="3">
    <source>
        <dbReference type="PROSITE-ProRule" id="PRU00043"/>
    </source>
</evidence>
<dbReference type="SMR" id="Q5DRD6"/>
<dbReference type="FunCoup" id="Q5DRD6">
    <property type="interactions" value="54"/>
</dbReference>
<dbReference type="STRING" id="9598.ENSPTRP00000029637"/>
<dbReference type="GlyCosmos" id="Q5DRD6">
    <property type="glycosylation" value="3 sites, No reported glycans"/>
</dbReference>
<dbReference type="PaxDb" id="9598-ENSPTRP00000047956"/>
<dbReference type="eggNOG" id="KOG3594">
    <property type="taxonomic scope" value="Eukaryota"/>
</dbReference>
<dbReference type="InParanoid" id="Q5DRD6"/>
<dbReference type="Proteomes" id="UP000002277">
    <property type="component" value="Unplaced"/>
</dbReference>
<dbReference type="GO" id="GO:0005886">
    <property type="term" value="C:plasma membrane"/>
    <property type="evidence" value="ECO:0000318"/>
    <property type="project" value="GO_Central"/>
</dbReference>
<dbReference type="GO" id="GO:0005509">
    <property type="term" value="F:calcium ion binding"/>
    <property type="evidence" value="ECO:0007669"/>
    <property type="project" value="InterPro"/>
</dbReference>
<dbReference type="GO" id="GO:0007155">
    <property type="term" value="P:cell adhesion"/>
    <property type="evidence" value="ECO:0000318"/>
    <property type="project" value="GO_Central"/>
</dbReference>
<dbReference type="GO" id="GO:0007156">
    <property type="term" value="P:homophilic cell adhesion via plasma membrane adhesion molecules"/>
    <property type="evidence" value="ECO:0007669"/>
    <property type="project" value="InterPro"/>
</dbReference>
<dbReference type="GO" id="GO:0007399">
    <property type="term" value="P:nervous system development"/>
    <property type="evidence" value="ECO:0007669"/>
    <property type="project" value="UniProtKB-ARBA"/>
</dbReference>
<dbReference type="CDD" id="cd11304">
    <property type="entry name" value="Cadherin_repeat"/>
    <property type="match status" value="5"/>
</dbReference>
<dbReference type="FunFam" id="2.60.40.60:FF:000001">
    <property type="entry name" value="Protocadherin alpha 2"/>
    <property type="match status" value="1"/>
</dbReference>
<dbReference type="FunFam" id="2.60.40.60:FF:000002">
    <property type="entry name" value="Protocadherin alpha 2"/>
    <property type="match status" value="1"/>
</dbReference>
<dbReference type="FunFam" id="2.60.40.60:FF:000006">
    <property type="entry name" value="Protocadherin alpha 2"/>
    <property type="match status" value="1"/>
</dbReference>
<dbReference type="FunFam" id="2.60.40.60:FF:000046">
    <property type="entry name" value="Protocadherin beta 5"/>
    <property type="match status" value="1"/>
</dbReference>
<dbReference type="FunFam" id="2.60.40.60:FF:000309">
    <property type="entry name" value="Protocadherin beta-8"/>
    <property type="match status" value="1"/>
</dbReference>
<dbReference type="FunFam" id="2.60.40.60:FF:000018">
    <property type="entry name" value="Protocadherin gamma c3"/>
    <property type="match status" value="1"/>
</dbReference>
<dbReference type="Gene3D" id="2.60.40.60">
    <property type="entry name" value="Cadherins"/>
    <property type="match status" value="6"/>
</dbReference>
<dbReference type="InterPro" id="IPR002126">
    <property type="entry name" value="Cadherin-like_dom"/>
</dbReference>
<dbReference type="InterPro" id="IPR015919">
    <property type="entry name" value="Cadherin-like_sf"/>
</dbReference>
<dbReference type="InterPro" id="IPR032455">
    <property type="entry name" value="Cadherin_C"/>
</dbReference>
<dbReference type="InterPro" id="IPR020894">
    <property type="entry name" value="Cadherin_CS"/>
</dbReference>
<dbReference type="InterPro" id="IPR013164">
    <property type="entry name" value="Cadherin_N"/>
</dbReference>
<dbReference type="InterPro" id="IPR050174">
    <property type="entry name" value="Protocadherin/Cadherin-CA"/>
</dbReference>
<dbReference type="PANTHER" id="PTHR24028">
    <property type="entry name" value="CADHERIN-87A"/>
    <property type="match status" value="1"/>
</dbReference>
<dbReference type="PANTHER" id="PTHR24028:SF318">
    <property type="entry name" value="PROTOCADHERIN BETA-13"/>
    <property type="match status" value="1"/>
</dbReference>
<dbReference type="Pfam" id="PF00028">
    <property type="entry name" value="Cadherin"/>
    <property type="match status" value="5"/>
</dbReference>
<dbReference type="Pfam" id="PF08266">
    <property type="entry name" value="Cadherin_2"/>
    <property type="match status" value="1"/>
</dbReference>
<dbReference type="Pfam" id="PF16492">
    <property type="entry name" value="Cadherin_C_2"/>
    <property type="match status" value="1"/>
</dbReference>
<dbReference type="PRINTS" id="PR00205">
    <property type="entry name" value="CADHERIN"/>
</dbReference>
<dbReference type="SMART" id="SM00112">
    <property type="entry name" value="CA"/>
    <property type="match status" value="6"/>
</dbReference>
<dbReference type="SUPFAM" id="SSF49313">
    <property type="entry name" value="Cadherin-like"/>
    <property type="match status" value="5"/>
</dbReference>
<dbReference type="PROSITE" id="PS00232">
    <property type="entry name" value="CADHERIN_1"/>
    <property type="match status" value="5"/>
</dbReference>
<dbReference type="PROSITE" id="PS50268">
    <property type="entry name" value="CADHERIN_2"/>
    <property type="match status" value="6"/>
</dbReference>
<keyword id="KW-0106">Calcium</keyword>
<keyword id="KW-0130">Cell adhesion</keyword>
<keyword id="KW-1003">Cell membrane</keyword>
<keyword id="KW-0325">Glycoprotein</keyword>
<keyword id="KW-0472">Membrane</keyword>
<keyword id="KW-1185">Reference proteome</keyword>
<keyword id="KW-0677">Repeat</keyword>
<keyword id="KW-0732">Signal</keyword>
<keyword id="KW-0812">Transmembrane</keyword>
<keyword id="KW-1133">Transmembrane helix</keyword>
<sequence>MEASGKLICRQRQVLFSFLLLGLSLAGAAEPRSYSVVEETEGSSFVTNLAKDLGLEQREFSRRGVRVVSRGNKLHLQLNQETGDLLLNEKLDREDLCGHTEPCVLRFQVLLESPFEFFQAELQVIDINDHSPVFLDKQMLVKVSESSPPGTAFPLKNAEDLDVGQNNIENYIISPNSHFRVLTRKRSDGRKYPELVLDKALDREEEAELRLTLTALDGGSPPRSGTAQVYIEVLDVNDNAPEFEQPFYRVQISEDSPVGFLVVKVSATDVDTGVNGEISYSLFQASEEIGKTFKINPLTGEIELKKQLDFEKLQSYEVNIEARDAGTFSGKCTVLIQVIDVNDHAPEVTMSAFTSPIPENAPETVVALFSVSDLDSGENGKISCSIQEDLPFLLKSAENFYTLLTERPLDRESRAEYNITITVTDLGTPMLKTQLNMTVLIADVNDNAPAFTQTSYTLFVRENNSPALHIGSVSATDRDSGTNAQVTYSLLPPQDPHLPLTSLVSINADNGHLFALRSLDYEALQGFEFRVGASDHGSPALSSEALVRVLVLDANDNSPFVLYPLQNGSAPCTELVPRAAEPGYLVTKVVAVDGDSGQNAWLSYQLLKATEPGLFGVWAHNGEVRTARLLSERDAAKHRLAVLVKDNGEPPRSATATLHVLLVDGFSQPYLPLPEAAPTQAQADSLTVYLVVALASVSSLFLFSVLLFVAVRLCRRSRAASVGRCLVPEGPLPGHLVDMGGTGTLSQSYQYEVCLAGGSGTNEFKFLKPIIPNFPPQCPGKEIQGNSTFPNNFGFNIQ</sequence>
<name>PCDBD_PANTR</name>
<reference key="1">
    <citation type="journal article" date="2005" name="Nature">
        <title>Initial sequence of the chimpanzee genome and comparison with the human genome.</title>
        <authorList>
            <consortium name="Chimpanzee sequencing and analysis consortium"/>
        </authorList>
    </citation>
    <scope>NUCLEOTIDE SEQUENCE [LARGE SCALE GENOMIC DNA]</scope>
</reference>
<reference key="2">
    <citation type="journal article" date="2005" name="Genetics">
        <title>Comparative genomics and diversifying selection of the clustered vertebrate protocadherin genes.</title>
        <authorList>
            <person name="Wu Q."/>
        </authorList>
    </citation>
    <scope>IDENTIFICATION</scope>
</reference>
<gene>
    <name type="primary">PCDHB13</name>
</gene>
<accession>Q5DRD6</accession>
<feature type="signal peptide" evidence="2">
    <location>
        <begin position="1"/>
        <end position="28"/>
    </location>
</feature>
<feature type="chain" id="PRO_0000003939" description="Protocadherin beta-13">
    <location>
        <begin position="29"/>
        <end position="798"/>
    </location>
</feature>
<feature type="topological domain" description="Extracellular" evidence="2">
    <location>
        <begin position="29"/>
        <end position="690"/>
    </location>
</feature>
<feature type="transmembrane region" description="Helical" evidence="2">
    <location>
        <begin position="691"/>
        <end position="711"/>
    </location>
</feature>
<feature type="topological domain" description="Cytoplasmic" evidence="2">
    <location>
        <begin position="712"/>
        <end position="798"/>
    </location>
</feature>
<feature type="domain" description="Cadherin 1" evidence="3">
    <location>
        <begin position="36"/>
        <end position="134"/>
    </location>
</feature>
<feature type="domain" description="Cadherin 2" evidence="3">
    <location>
        <begin position="139"/>
        <end position="243"/>
    </location>
</feature>
<feature type="domain" description="Cadherin 3" evidence="3">
    <location>
        <begin position="248"/>
        <end position="348"/>
    </location>
</feature>
<feature type="domain" description="Cadherin 4" evidence="3">
    <location>
        <begin position="353"/>
        <end position="451"/>
    </location>
</feature>
<feature type="domain" description="Cadherin 5" evidence="3">
    <location>
        <begin position="456"/>
        <end position="561"/>
    </location>
</feature>
<feature type="domain" description="Cadherin 6" evidence="3">
    <location>
        <begin position="568"/>
        <end position="671"/>
    </location>
</feature>
<feature type="glycosylation site" description="N-linked (GlcNAc...) asparagine" evidence="2">
    <location>
        <position position="418"/>
    </location>
</feature>
<feature type="glycosylation site" description="N-linked (GlcNAc...) asparagine" evidence="2">
    <location>
        <position position="436"/>
    </location>
</feature>
<feature type="glycosylation site" description="N-linked (GlcNAc...) asparagine" evidence="2">
    <location>
        <position position="567"/>
    </location>
</feature>
<organism>
    <name type="scientific">Pan troglodytes</name>
    <name type="common">Chimpanzee</name>
    <dbReference type="NCBI Taxonomy" id="9598"/>
    <lineage>
        <taxon>Eukaryota</taxon>
        <taxon>Metazoa</taxon>
        <taxon>Chordata</taxon>
        <taxon>Craniata</taxon>
        <taxon>Vertebrata</taxon>
        <taxon>Euteleostomi</taxon>
        <taxon>Mammalia</taxon>
        <taxon>Eutheria</taxon>
        <taxon>Euarchontoglires</taxon>
        <taxon>Primates</taxon>
        <taxon>Haplorrhini</taxon>
        <taxon>Catarrhini</taxon>
        <taxon>Hominidae</taxon>
        <taxon>Pan</taxon>
    </lineage>
</organism>